<reference key="1">
    <citation type="journal article" date="2008" name="Infect. Immun.">
        <title>Genomic comparison of virulent Rickettsia rickettsii Sheila Smith and avirulent Rickettsia rickettsii Iowa.</title>
        <authorList>
            <person name="Ellison D.W."/>
            <person name="Clark T.R."/>
            <person name="Sturdevant D.E."/>
            <person name="Virtaneva K."/>
            <person name="Porcella S.F."/>
            <person name="Hackstadt T."/>
        </authorList>
    </citation>
    <scope>NUCLEOTIDE SEQUENCE [LARGE SCALE GENOMIC DNA]</scope>
    <source>
        <strain>Iowa</strain>
    </source>
</reference>
<name>RLME_RICRO</name>
<protein>
    <recommendedName>
        <fullName evidence="1">Ribosomal RNA large subunit methyltransferase E</fullName>
        <ecNumber evidence="1">2.1.1.166</ecNumber>
    </recommendedName>
    <alternativeName>
        <fullName evidence="1">23S rRNA Um2552 methyltransferase</fullName>
    </alternativeName>
    <alternativeName>
        <fullName evidence="1">rRNA (uridine-2'-O-)-methyltransferase</fullName>
    </alternativeName>
</protein>
<proteinExistence type="inferred from homology"/>
<sequence>MTNNLSGYRNKFVRVKTSKKRTVSSSNWLRRQLNDPYVAKARIDGFRSRAAYKLLEIHEKFKLFTPNMKVVDLGAAPGGWSQVASKLIKASDNNLNNKIISIDVLEIEHVAGVEFVQKDFFEADTEELIIQALDGRADIVMSDMASNTIGHKATDHIRTLLLCEQAFEFALKVLKPSGHFIAKIFRGGAENELLHKVKREFKTVKHFKPSSSRSESTEIYLVALNKK</sequence>
<evidence type="ECO:0000255" key="1">
    <source>
        <dbReference type="HAMAP-Rule" id="MF_01547"/>
    </source>
</evidence>
<gene>
    <name evidence="1" type="primary">rlmE</name>
    <name evidence="1" type="synonym">ftsJ</name>
    <name evidence="1" type="synonym">rrmJ</name>
    <name type="ordered locus">RrIowa_0253</name>
</gene>
<comment type="function">
    <text evidence="1">Specifically methylates the uridine in position 2552 of 23S rRNA at the 2'-O position of the ribose in the fully assembled 50S ribosomal subunit.</text>
</comment>
<comment type="catalytic activity">
    <reaction evidence="1">
        <text>uridine(2552) in 23S rRNA + S-adenosyl-L-methionine = 2'-O-methyluridine(2552) in 23S rRNA + S-adenosyl-L-homocysteine + H(+)</text>
        <dbReference type="Rhea" id="RHEA:42720"/>
        <dbReference type="Rhea" id="RHEA-COMP:10202"/>
        <dbReference type="Rhea" id="RHEA-COMP:10203"/>
        <dbReference type="ChEBI" id="CHEBI:15378"/>
        <dbReference type="ChEBI" id="CHEBI:57856"/>
        <dbReference type="ChEBI" id="CHEBI:59789"/>
        <dbReference type="ChEBI" id="CHEBI:65315"/>
        <dbReference type="ChEBI" id="CHEBI:74478"/>
        <dbReference type="EC" id="2.1.1.166"/>
    </reaction>
</comment>
<comment type="subcellular location">
    <subcellularLocation>
        <location evidence="1">Cytoplasm</location>
    </subcellularLocation>
</comment>
<comment type="similarity">
    <text evidence="1">Belongs to the class I-like SAM-binding methyltransferase superfamily. RNA methyltransferase RlmE family.</text>
</comment>
<keyword id="KW-0963">Cytoplasm</keyword>
<keyword id="KW-0489">Methyltransferase</keyword>
<keyword id="KW-0698">rRNA processing</keyword>
<keyword id="KW-0949">S-adenosyl-L-methionine</keyword>
<keyword id="KW-0808">Transferase</keyword>
<accession>B0BWD8</accession>
<dbReference type="EC" id="2.1.1.166" evidence="1"/>
<dbReference type="EMBL" id="CP000766">
    <property type="protein sequence ID" value="ABY72164.1"/>
    <property type="molecule type" value="Genomic_DNA"/>
</dbReference>
<dbReference type="RefSeq" id="WP_012150421.1">
    <property type="nucleotide sequence ID" value="NC_010263.3"/>
</dbReference>
<dbReference type="SMR" id="B0BWD8"/>
<dbReference type="KEGG" id="rrj:RrIowa_0253"/>
<dbReference type="eggNOG" id="COG0293">
    <property type="taxonomic scope" value="Bacteria"/>
</dbReference>
<dbReference type="HOGENOM" id="CLU_009422_4_0_5"/>
<dbReference type="Proteomes" id="UP000000796">
    <property type="component" value="Chromosome"/>
</dbReference>
<dbReference type="GO" id="GO:0005737">
    <property type="term" value="C:cytoplasm"/>
    <property type="evidence" value="ECO:0007669"/>
    <property type="project" value="UniProtKB-SubCell"/>
</dbReference>
<dbReference type="GO" id="GO:0008650">
    <property type="term" value="F:rRNA (uridine-2'-O-)-methyltransferase activity"/>
    <property type="evidence" value="ECO:0007669"/>
    <property type="project" value="UniProtKB-UniRule"/>
</dbReference>
<dbReference type="FunFam" id="3.40.50.150:FF:000354">
    <property type="entry name" value="Ribosomal RNA large subunit methyltransferase E"/>
    <property type="match status" value="1"/>
</dbReference>
<dbReference type="Gene3D" id="3.40.50.150">
    <property type="entry name" value="Vaccinia Virus protein VP39"/>
    <property type="match status" value="1"/>
</dbReference>
<dbReference type="HAMAP" id="MF_01547">
    <property type="entry name" value="RNA_methyltr_E"/>
    <property type="match status" value="1"/>
</dbReference>
<dbReference type="InterPro" id="IPR050082">
    <property type="entry name" value="RNA_methyltr_RlmE"/>
</dbReference>
<dbReference type="InterPro" id="IPR002877">
    <property type="entry name" value="RNA_MeTrfase_FtsJ_dom"/>
</dbReference>
<dbReference type="InterPro" id="IPR015507">
    <property type="entry name" value="rRNA-MeTfrase_E"/>
</dbReference>
<dbReference type="InterPro" id="IPR029063">
    <property type="entry name" value="SAM-dependent_MTases_sf"/>
</dbReference>
<dbReference type="PANTHER" id="PTHR10920">
    <property type="entry name" value="RIBOSOMAL RNA METHYLTRANSFERASE"/>
    <property type="match status" value="1"/>
</dbReference>
<dbReference type="PANTHER" id="PTHR10920:SF18">
    <property type="entry name" value="RRNA METHYLTRANSFERASE 2, MITOCHONDRIAL"/>
    <property type="match status" value="1"/>
</dbReference>
<dbReference type="Pfam" id="PF01728">
    <property type="entry name" value="FtsJ"/>
    <property type="match status" value="1"/>
</dbReference>
<dbReference type="PIRSF" id="PIRSF005461">
    <property type="entry name" value="23S_rRNA_mtase"/>
    <property type="match status" value="1"/>
</dbReference>
<dbReference type="SUPFAM" id="SSF53335">
    <property type="entry name" value="S-adenosyl-L-methionine-dependent methyltransferases"/>
    <property type="match status" value="1"/>
</dbReference>
<organism>
    <name type="scientific">Rickettsia rickettsii (strain Iowa)</name>
    <dbReference type="NCBI Taxonomy" id="452659"/>
    <lineage>
        <taxon>Bacteria</taxon>
        <taxon>Pseudomonadati</taxon>
        <taxon>Pseudomonadota</taxon>
        <taxon>Alphaproteobacteria</taxon>
        <taxon>Rickettsiales</taxon>
        <taxon>Rickettsiaceae</taxon>
        <taxon>Rickettsieae</taxon>
        <taxon>Rickettsia</taxon>
        <taxon>spotted fever group</taxon>
    </lineage>
</organism>
<feature type="chain" id="PRO_1000087707" description="Ribosomal RNA large subunit methyltransferase E">
    <location>
        <begin position="1"/>
        <end position="227"/>
    </location>
</feature>
<feature type="active site" description="Proton acceptor" evidence="1">
    <location>
        <position position="183"/>
    </location>
</feature>
<feature type="binding site" evidence="1">
    <location>
        <position position="78"/>
    </location>
    <ligand>
        <name>S-adenosyl-L-methionine</name>
        <dbReference type="ChEBI" id="CHEBI:59789"/>
    </ligand>
</feature>
<feature type="binding site" evidence="1">
    <location>
        <position position="80"/>
    </location>
    <ligand>
        <name>S-adenosyl-L-methionine</name>
        <dbReference type="ChEBI" id="CHEBI:59789"/>
    </ligand>
</feature>
<feature type="binding site" evidence="1">
    <location>
        <position position="103"/>
    </location>
    <ligand>
        <name>S-adenosyl-L-methionine</name>
        <dbReference type="ChEBI" id="CHEBI:59789"/>
    </ligand>
</feature>
<feature type="binding site" evidence="1">
    <location>
        <position position="119"/>
    </location>
    <ligand>
        <name>S-adenosyl-L-methionine</name>
        <dbReference type="ChEBI" id="CHEBI:59789"/>
    </ligand>
</feature>
<feature type="binding site" evidence="1">
    <location>
        <position position="143"/>
    </location>
    <ligand>
        <name>S-adenosyl-L-methionine</name>
        <dbReference type="ChEBI" id="CHEBI:59789"/>
    </ligand>
</feature>